<gene>
    <name evidence="1" type="primary">ispDF</name>
    <name type="ordered locus">HNE_2014</name>
</gene>
<reference key="1">
    <citation type="journal article" date="2006" name="J. Bacteriol.">
        <title>Comparative genomic evidence for a close relationship between the dimorphic prosthecate bacteria Hyphomonas neptunium and Caulobacter crescentus.</title>
        <authorList>
            <person name="Badger J.H."/>
            <person name="Hoover T.R."/>
            <person name="Brun Y.V."/>
            <person name="Weiner R.M."/>
            <person name="Laub M.T."/>
            <person name="Alexandre G."/>
            <person name="Mrazek J."/>
            <person name="Ren Q."/>
            <person name="Paulsen I.T."/>
            <person name="Nelson K.E."/>
            <person name="Khouri H.M."/>
            <person name="Radune D."/>
            <person name="Sosa J."/>
            <person name="Dodson R.J."/>
            <person name="Sullivan S.A."/>
            <person name="Rosovitz M.J."/>
            <person name="Madupu R."/>
            <person name="Brinkac L.M."/>
            <person name="Durkin A.S."/>
            <person name="Daugherty S.C."/>
            <person name="Kothari S.P."/>
            <person name="Giglio M.G."/>
            <person name="Zhou L."/>
            <person name="Haft D.H."/>
            <person name="Selengut J.D."/>
            <person name="Davidsen T.M."/>
            <person name="Yang Q."/>
            <person name="Zafar N."/>
            <person name="Ward N.L."/>
        </authorList>
    </citation>
    <scope>NUCLEOTIDE SEQUENCE [LARGE SCALE GENOMIC DNA]</scope>
    <source>
        <strain>ATCC 15444</strain>
    </source>
</reference>
<feature type="chain" id="PRO_0000292852" description="Bifunctional enzyme IspD/IspF">
    <location>
        <begin position="1"/>
        <end position="378"/>
    </location>
</feature>
<feature type="region of interest" description="2-C-methyl-D-erythritol 4-phosphate cytidylyltransferase" evidence="1">
    <location>
        <begin position="1"/>
        <end position="222"/>
    </location>
</feature>
<feature type="region of interest" description="2-C-methyl-D-erythritol 2,4-cyclodiphosphate synthase" evidence="1">
    <location>
        <begin position="222"/>
        <end position="378"/>
    </location>
</feature>
<feature type="binding site" evidence="1">
    <location>
        <begin position="228"/>
        <end position="230"/>
    </location>
    <ligand>
        <name>4-CDP-2-C-methyl-D-erythritol 2-phosphate</name>
        <dbReference type="ChEBI" id="CHEBI:57919"/>
    </ligand>
</feature>
<feature type="binding site" evidence="1">
    <location>
        <position position="228"/>
    </location>
    <ligand>
        <name>a divalent metal cation</name>
        <dbReference type="ChEBI" id="CHEBI:60240"/>
    </ligand>
</feature>
<feature type="binding site" evidence="1">
    <location>
        <position position="230"/>
    </location>
    <ligand>
        <name>a divalent metal cation</name>
        <dbReference type="ChEBI" id="CHEBI:60240"/>
    </ligand>
</feature>
<feature type="binding site" evidence="1">
    <location>
        <begin position="254"/>
        <end position="255"/>
    </location>
    <ligand>
        <name>4-CDP-2-C-methyl-D-erythritol 2-phosphate</name>
        <dbReference type="ChEBI" id="CHEBI:57919"/>
    </ligand>
</feature>
<feature type="binding site" evidence="1">
    <location>
        <position position="262"/>
    </location>
    <ligand>
        <name>a divalent metal cation</name>
        <dbReference type="ChEBI" id="CHEBI:60240"/>
    </ligand>
</feature>
<feature type="binding site" evidence="1">
    <location>
        <begin position="276"/>
        <end position="278"/>
    </location>
    <ligand>
        <name>4-CDP-2-C-methyl-D-erythritol 2-phosphate</name>
        <dbReference type="ChEBI" id="CHEBI:57919"/>
    </ligand>
</feature>
<feature type="binding site" evidence="1">
    <location>
        <begin position="352"/>
        <end position="355"/>
    </location>
    <ligand>
        <name>4-CDP-2-C-methyl-D-erythritol 2-phosphate</name>
        <dbReference type="ChEBI" id="CHEBI:57919"/>
    </ligand>
</feature>
<feature type="binding site" evidence="1">
    <location>
        <position position="359"/>
    </location>
    <ligand>
        <name>4-CDP-2-C-methyl-D-erythritol 2-phosphate</name>
        <dbReference type="ChEBI" id="CHEBI:57919"/>
    </ligand>
</feature>
<feature type="binding site" evidence="1">
    <location>
        <position position="362"/>
    </location>
    <ligand>
        <name>4-CDP-2-C-methyl-D-erythritol 2-phosphate</name>
        <dbReference type="ChEBI" id="CHEBI:57919"/>
    </ligand>
</feature>
<feature type="site" description="Transition state stabilizer" evidence="1">
    <location>
        <position position="16"/>
    </location>
</feature>
<feature type="site" description="Transition state stabilizer" evidence="1">
    <location>
        <position position="23"/>
    </location>
</feature>
<feature type="site" description="Positions MEP for the nucleophilic attack" evidence="1">
    <location>
        <position position="148"/>
    </location>
</feature>
<feature type="site" description="Positions MEP for the nucleophilic attack" evidence="1">
    <location>
        <position position="201"/>
    </location>
</feature>
<feature type="site" description="Transition state stabilizer" evidence="1">
    <location>
        <position position="254"/>
    </location>
</feature>
<feature type="site" description="Transition state stabilizer" evidence="1">
    <location>
        <position position="353"/>
    </location>
</feature>
<sequence>MTETVAIIVAGGRGQRAGAERPKQWQMLLGKRVIDWSIAAFVDHPQISQVVIVAGDELGDCSAEPKIIQAKPGNTRTQSVLSGLAAATISEDATVVIHDAARPGIDAATISSLIARLQDPSVSGAAPAMPVADALKTNSGQSWTNVDRTGLVRVQTPQAFRLGEIRAALSAAGPDLVDDLTAIEAAGGRVEIVSGSARLTKITYPEDFDMLARLLSPTGAPRIGKGYDVHEFEAGDHVTLCGVAIPHIAKLKGHSDADAAWHALTDAILGAVALGDIGDHFPPSDPQWKGADSGLFLKEAQRLAEAKGYVIANCDITVICEAPKVKPHREAMRARTAELLGLPLDAVSVKATTTEGLGFTGRREGIAAEAVALLMPKG</sequence>
<dbReference type="EC" id="2.7.7.60" evidence="1"/>
<dbReference type="EC" id="4.6.1.12" evidence="1"/>
<dbReference type="EMBL" id="CP000158">
    <property type="protein sequence ID" value="ABI76497.1"/>
    <property type="molecule type" value="Genomic_DNA"/>
</dbReference>
<dbReference type="RefSeq" id="WP_011647013.1">
    <property type="nucleotide sequence ID" value="NC_008358.1"/>
</dbReference>
<dbReference type="SMR" id="Q0C0N0"/>
<dbReference type="STRING" id="228405.HNE_2014"/>
<dbReference type="KEGG" id="hne:HNE_2014"/>
<dbReference type="eggNOG" id="COG0245">
    <property type="taxonomic scope" value="Bacteria"/>
</dbReference>
<dbReference type="eggNOG" id="COG1211">
    <property type="taxonomic scope" value="Bacteria"/>
</dbReference>
<dbReference type="HOGENOM" id="CLU_042800_2_5_5"/>
<dbReference type="UniPathway" id="UPA00056">
    <property type="reaction ID" value="UER00093"/>
</dbReference>
<dbReference type="UniPathway" id="UPA00056">
    <property type="reaction ID" value="UER00095"/>
</dbReference>
<dbReference type="Proteomes" id="UP000001959">
    <property type="component" value="Chromosome"/>
</dbReference>
<dbReference type="GO" id="GO:0008685">
    <property type="term" value="F:2-C-methyl-D-erythritol 2,4-cyclodiphosphate synthase activity"/>
    <property type="evidence" value="ECO:0007669"/>
    <property type="project" value="UniProtKB-UniRule"/>
</dbReference>
<dbReference type="GO" id="GO:0050518">
    <property type="term" value="F:2-C-methyl-D-erythritol 4-phosphate cytidylyltransferase activity"/>
    <property type="evidence" value="ECO:0007669"/>
    <property type="project" value="UniProtKB-UniRule"/>
</dbReference>
<dbReference type="GO" id="GO:0046872">
    <property type="term" value="F:metal ion binding"/>
    <property type="evidence" value="ECO:0007669"/>
    <property type="project" value="UniProtKB-KW"/>
</dbReference>
<dbReference type="GO" id="GO:0019288">
    <property type="term" value="P:isopentenyl diphosphate biosynthetic process, methylerythritol 4-phosphate pathway"/>
    <property type="evidence" value="ECO:0007669"/>
    <property type="project" value="UniProtKB-UniRule"/>
</dbReference>
<dbReference type="GO" id="GO:0016114">
    <property type="term" value="P:terpenoid biosynthetic process"/>
    <property type="evidence" value="ECO:0007669"/>
    <property type="project" value="InterPro"/>
</dbReference>
<dbReference type="CDD" id="cd02516">
    <property type="entry name" value="CDP-ME_synthetase"/>
    <property type="match status" value="1"/>
</dbReference>
<dbReference type="CDD" id="cd00554">
    <property type="entry name" value="MECDP_synthase"/>
    <property type="match status" value="1"/>
</dbReference>
<dbReference type="Gene3D" id="3.30.1330.50">
    <property type="entry name" value="2-C-methyl-D-erythritol 2,4-cyclodiphosphate synthase"/>
    <property type="match status" value="1"/>
</dbReference>
<dbReference type="Gene3D" id="3.90.550.10">
    <property type="entry name" value="Spore Coat Polysaccharide Biosynthesis Protein SpsA, Chain A"/>
    <property type="match status" value="1"/>
</dbReference>
<dbReference type="HAMAP" id="MF_01520">
    <property type="entry name" value="IspDF"/>
    <property type="match status" value="1"/>
</dbReference>
<dbReference type="HAMAP" id="MF_00107">
    <property type="entry name" value="IspF"/>
    <property type="match status" value="1"/>
</dbReference>
<dbReference type="InterPro" id="IPR001228">
    <property type="entry name" value="IspD"/>
</dbReference>
<dbReference type="InterPro" id="IPR026596">
    <property type="entry name" value="IspD/F"/>
</dbReference>
<dbReference type="InterPro" id="IPR034683">
    <property type="entry name" value="IspD/TarI"/>
</dbReference>
<dbReference type="InterPro" id="IPR018294">
    <property type="entry name" value="ISPD_synthase_CS"/>
</dbReference>
<dbReference type="InterPro" id="IPR003526">
    <property type="entry name" value="MECDP_synthase"/>
</dbReference>
<dbReference type="InterPro" id="IPR020555">
    <property type="entry name" value="MECDP_synthase_CS"/>
</dbReference>
<dbReference type="InterPro" id="IPR036571">
    <property type="entry name" value="MECDP_synthase_sf"/>
</dbReference>
<dbReference type="InterPro" id="IPR029044">
    <property type="entry name" value="Nucleotide-diphossugar_trans"/>
</dbReference>
<dbReference type="NCBIfam" id="TIGR00453">
    <property type="entry name" value="ispD"/>
    <property type="match status" value="1"/>
</dbReference>
<dbReference type="NCBIfam" id="TIGR00151">
    <property type="entry name" value="ispF"/>
    <property type="match status" value="1"/>
</dbReference>
<dbReference type="NCBIfam" id="NF006899">
    <property type="entry name" value="PRK09382.1"/>
    <property type="match status" value="1"/>
</dbReference>
<dbReference type="PANTHER" id="PTHR43181">
    <property type="entry name" value="2-C-METHYL-D-ERYTHRITOL 2,4-CYCLODIPHOSPHATE SYNTHASE, CHLOROPLASTIC"/>
    <property type="match status" value="1"/>
</dbReference>
<dbReference type="PANTHER" id="PTHR43181:SF1">
    <property type="entry name" value="2-C-METHYL-D-ERYTHRITOL 2,4-CYCLODIPHOSPHATE SYNTHASE, CHLOROPLASTIC"/>
    <property type="match status" value="1"/>
</dbReference>
<dbReference type="Pfam" id="PF01128">
    <property type="entry name" value="IspD"/>
    <property type="match status" value="1"/>
</dbReference>
<dbReference type="Pfam" id="PF02542">
    <property type="entry name" value="YgbB"/>
    <property type="match status" value="1"/>
</dbReference>
<dbReference type="SUPFAM" id="SSF69765">
    <property type="entry name" value="IpsF-like"/>
    <property type="match status" value="1"/>
</dbReference>
<dbReference type="SUPFAM" id="SSF53448">
    <property type="entry name" value="Nucleotide-diphospho-sugar transferases"/>
    <property type="match status" value="1"/>
</dbReference>
<dbReference type="PROSITE" id="PS01295">
    <property type="entry name" value="ISPD"/>
    <property type="match status" value="1"/>
</dbReference>
<dbReference type="PROSITE" id="PS01350">
    <property type="entry name" value="ISPF"/>
    <property type="match status" value="1"/>
</dbReference>
<proteinExistence type="inferred from homology"/>
<name>ISPDF_HYPNA</name>
<comment type="function">
    <text evidence="1">Bifunctional enzyme that catalyzes the formation of 4-diphosphocytidyl-2-C-methyl-D-erythritol from CTP and 2-C-methyl-D-erythritol 4-phosphate (MEP) (IspD), and catalyzes the conversion of 4-diphosphocytidyl-2-C-methyl-D-erythritol 2-phosphate (CDP-ME2P) to 2-C-methyl-D-erythritol 2,4-cyclodiphosphate (ME-CPP) with a corresponding release of cytidine 5-monophosphate (CMP) (IspF).</text>
</comment>
<comment type="catalytic activity">
    <reaction evidence="1">
        <text>2-C-methyl-D-erythritol 4-phosphate + CTP + H(+) = 4-CDP-2-C-methyl-D-erythritol + diphosphate</text>
        <dbReference type="Rhea" id="RHEA:13429"/>
        <dbReference type="ChEBI" id="CHEBI:15378"/>
        <dbReference type="ChEBI" id="CHEBI:33019"/>
        <dbReference type="ChEBI" id="CHEBI:37563"/>
        <dbReference type="ChEBI" id="CHEBI:57823"/>
        <dbReference type="ChEBI" id="CHEBI:58262"/>
        <dbReference type="EC" id="2.7.7.60"/>
    </reaction>
</comment>
<comment type="catalytic activity">
    <reaction evidence="1">
        <text>4-CDP-2-C-methyl-D-erythritol 2-phosphate = 2-C-methyl-D-erythritol 2,4-cyclic diphosphate + CMP</text>
        <dbReference type="Rhea" id="RHEA:23864"/>
        <dbReference type="ChEBI" id="CHEBI:57919"/>
        <dbReference type="ChEBI" id="CHEBI:58483"/>
        <dbReference type="ChEBI" id="CHEBI:60377"/>
        <dbReference type="EC" id="4.6.1.12"/>
    </reaction>
</comment>
<comment type="cofactor">
    <cofactor evidence="1">
        <name>a divalent metal cation</name>
        <dbReference type="ChEBI" id="CHEBI:60240"/>
    </cofactor>
</comment>
<comment type="pathway">
    <text evidence="1">Isoprenoid biosynthesis; isopentenyl diphosphate biosynthesis via DXP pathway; isopentenyl diphosphate from 1-deoxy-D-xylulose 5-phosphate: step 2/6.</text>
</comment>
<comment type="pathway">
    <text evidence="1">Isoprenoid biosynthesis; isopentenyl diphosphate biosynthesis via DXP pathway; isopentenyl diphosphate from 1-deoxy-D-xylulose 5-phosphate: step 4/6.</text>
</comment>
<comment type="similarity">
    <text evidence="1">In the N-terminal section; belongs to the IspD/TarI cytidylyltransferase family. IspD subfamily.</text>
</comment>
<comment type="similarity">
    <text evidence="1">In the C-terminal section; belongs to the IspF family.</text>
</comment>
<accession>Q0C0N0</accession>
<protein>
    <recommendedName>
        <fullName evidence="1">Bifunctional enzyme IspD/IspF</fullName>
    </recommendedName>
    <domain>
        <recommendedName>
            <fullName evidence="1">2-C-methyl-D-erythritol 4-phosphate cytidylyltransferase</fullName>
            <ecNumber evidence="1">2.7.7.60</ecNumber>
        </recommendedName>
        <alternativeName>
            <fullName evidence="1">4-diphosphocytidyl-2C-methyl-D-erythritol synthase</fullName>
        </alternativeName>
        <alternativeName>
            <fullName evidence="1">MEP cytidylyltransferase</fullName>
            <shortName evidence="1">MCT</shortName>
        </alternativeName>
    </domain>
    <domain>
        <recommendedName>
            <fullName evidence="1">2-C-methyl-D-erythritol 2,4-cyclodiphosphate synthase</fullName>
            <shortName evidence="1">MECDP-synthase</shortName>
            <shortName evidence="1">MECPP-synthase</shortName>
            <shortName evidence="1">MECPS</shortName>
            <ecNumber evidence="1">4.6.1.12</ecNumber>
        </recommendedName>
    </domain>
</protein>
<organism>
    <name type="scientific">Hyphomonas neptunium (strain ATCC 15444)</name>
    <dbReference type="NCBI Taxonomy" id="228405"/>
    <lineage>
        <taxon>Bacteria</taxon>
        <taxon>Pseudomonadati</taxon>
        <taxon>Pseudomonadota</taxon>
        <taxon>Alphaproteobacteria</taxon>
        <taxon>Hyphomonadales</taxon>
        <taxon>Hyphomonadaceae</taxon>
        <taxon>Hyphomonas</taxon>
    </lineage>
</organism>
<evidence type="ECO:0000255" key="1">
    <source>
        <dbReference type="HAMAP-Rule" id="MF_01520"/>
    </source>
</evidence>
<keyword id="KW-0414">Isoprene biosynthesis</keyword>
<keyword id="KW-0456">Lyase</keyword>
<keyword id="KW-0479">Metal-binding</keyword>
<keyword id="KW-0511">Multifunctional enzyme</keyword>
<keyword id="KW-0548">Nucleotidyltransferase</keyword>
<keyword id="KW-1185">Reference proteome</keyword>
<keyword id="KW-0808">Transferase</keyword>